<sequence length="439" mass="47770">MQITIAIQDTTGDDQDFLSLQVFPDMTLETLRNSIQAETSHHPSTQHLYHNGNLITDNSKTLTQLNVTDGDMLALHVRETQRATAVPESQQGRPAAPPQQDPEFLRLQFLANPALRAEVERTAPDLAAAINDPQRWAQLFRERYDREQRERAERHRIIQQLNEDPFNPEAQARIEEIIRQERVTENLQTAMEHNPEVFGTVHMLYLDVEVNGAKVKALVDSGAQATIMSPDIAEACGIMRLVDKRYGGIAKGVGTAKIIGRVHTAPVKIGSLFLPCSFTVMEGKNVDMLLGLDMLKRYQACIDLAKNALVIQGEEIPFLGEADIPKATEEALQDEPTIEGPGGTTIGQRTGAVSGPGTAQHRQGQAGPSTAAQPGPSAPAPAPASASAPAPRAPQARSFPREHIEQLVALGADEQKAIRALEATDGNVEYAASLIFEGF</sequence>
<organism>
    <name type="scientific">Neurospora crassa (strain ATCC 24698 / 74-OR23-1A / CBS 708.71 / DSM 1257 / FGSC 987)</name>
    <dbReference type="NCBI Taxonomy" id="367110"/>
    <lineage>
        <taxon>Eukaryota</taxon>
        <taxon>Fungi</taxon>
        <taxon>Dikarya</taxon>
        <taxon>Ascomycota</taxon>
        <taxon>Pezizomycotina</taxon>
        <taxon>Sordariomycetes</taxon>
        <taxon>Sordariomycetidae</taxon>
        <taxon>Sordariales</taxon>
        <taxon>Sordariaceae</taxon>
        <taxon>Neurospora</taxon>
    </lineage>
</organism>
<feature type="chain" id="PRO_0000285317" description="DNA damage-inducible protein 1">
    <location>
        <begin position="1"/>
        <end position="439"/>
    </location>
</feature>
<feature type="domain" description="Ubiquitin-like" evidence="5">
    <location>
        <begin position="1"/>
        <end position="82"/>
    </location>
</feature>
<feature type="domain" description="UBA" evidence="4">
    <location>
        <begin position="398"/>
        <end position="438"/>
    </location>
</feature>
<feature type="region of interest" description="Disordered" evidence="6">
    <location>
        <begin position="82"/>
        <end position="101"/>
    </location>
</feature>
<feature type="region of interest" description="Disordered" evidence="6">
    <location>
        <begin position="333"/>
        <end position="398"/>
    </location>
</feature>
<feature type="compositionally biased region" description="Low complexity" evidence="6">
    <location>
        <begin position="364"/>
        <end position="375"/>
    </location>
</feature>
<feature type="compositionally biased region" description="Low complexity" evidence="6">
    <location>
        <begin position="383"/>
        <end position="398"/>
    </location>
</feature>
<feature type="active site" evidence="7">
    <location>
        <position position="220"/>
    </location>
</feature>
<protein>
    <recommendedName>
        <fullName>DNA damage-inducible protein 1</fullName>
        <ecNumber evidence="2">3.4.23.-</ecNumber>
    </recommendedName>
</protein>
<comment type="function">
    <text evidence="2 3">Probable aspartic protease. May be involved in the regulation of exocytosis. Acts as a linker between the 19S proteasome and polyubiquitinated proteins via UBA domain interactions with ubiquitin for their subsequent degradation. Required for S-phase checkpoint control.</text>
</comment>
<comment type="subunit">
    <text evidence="1">Binds ubiquitin and polyubiquitinated proteins.</text>
</comment>
<comment type="subcellular location">
    <subcellularLocation>
        <location evidence="1">Cytoplasm</location>
    </subcellularLocation>
</comment>
<comment type="similarity">
    <text evidence="7">Belongs to the DDI1 family.</text>
</comment>
<gene>
    <name type="primary">ddi-1</name>
    <name type="ORF">NCU05292</name>
</gene>
<reference key="1">
    <citation type="journal article" date="2003" name="Nature">
        <title>The genome sequence of the filamentous fungus Neurospora crassa.</title>
        <authorList>
            <person name="Galagan J.E."/>
            <person name="Calvo S.E."/>
            <person name="Borkovich K.A."/>
            <person name="Selker E.U."/>
            <person name="Read N.D."/>
            <person name="Jaffe D.B."/>
            <person name="FitzHugh W."/>
            <person name="Ma L.-J."/>
            <person name="Smirnov S."/>
            <person name="Purcell S."/>
            <person name="Rehman B."/>
            <person name="Elkins T."/>
            <person name="Engels R."/>
            <person name="Wang S."/>
            <person name="Nielsen C.B."/>
            <person name="Butler J."/>
            <person name="Endrizzi M."/>
            <person name="Qui D."/>
            <person name="Ianakiev P."/>
            <person name="Bell-Pedersen D."/>
            <person name="Nelson M.A."/>
            <person name="Werner-Washburne M."/>
            <person name="Selitrennikoff C.P."/>
            <person name="Kinsey J.A."/>
            <person name="Braun E.L."/>
            <person name="Zelter A."/>
            <person name="Schulte U."/>
            <person name="Kothe G.O."/>
            <person name="Jedd G."/>
            <person name="Mewes H.-W."/>
            <person name="Staben C."/>
            <person name="Marcotte E."/>
            <person name="Greenberg D."/>
            <person name="Roy A."/>
            <person name="Foley K."/>
            <person name="Naylor J."/>
            <person name="Stange-Thomann N."/>
            <person name="Barrett R."/>
            <person name="Gnerre S."/>
            <person name="Kamal M."/>
            <person name="Kamvysselis M."/>
            <person name="Mauceli E.W."/>
            <person name="Bielke C."/>
            <person name="Rudd S."/>
            <person name="Frishman D."/>
            <person name="Krystofova S."/>
            <person name="Rasmussen C."/>
            <person name="Metzenberg R.L."/>
            <person name="Perkins D.D."/>
            <person name="Kroken S."/>
            <person name="Cogoni C."/>
            <person name="Macino G."/>
            <person name="Catcheside D.E.A."/>
            <person name="Li W."/>
            <person name="Pratt R.J."/>
            <person name="Osmani S.A."/>
            <person name="DeSouza C.P.C."/>
            <person name="Glass N.L."/>
            <person name="Orbach M.J."/>
            <person name="Berglund J.A."/>
            <person name="Voelker R."/>
            <person name="Yarden O."/>
            <person name="Plamann M."/>
            <person name="Seiler S."/>
            <person name="Dunlap J.C."/>
            <person name="Radford A."/>
            <person name="Aramayo R."/>
            <person name="Natvig D.O."/>
            <person name="Alex L.A."/>
            <person name="Mannhaupt G."/>
            <person name="Ebbole D.J."/>
            <person name="Freitag M."/>
            <person name="Paulsen I."/>
            <person name="Sachs M.S."/>
            <person name="Lander E.S."/>
            <person name="Nusbaum C."/>
            <person name="Birren B.W."/>
        </authorList>
    </citation>
    <scope>NUCLEOTIDE SEQUENCE [LARGE SCALE GENOMIC DNA]</scope>
    <source>
        <strain>ATCC 24698 / 74-OR23-1A / CBS 708.71 / DSM 1257 / FGSC 987</strain>
    </source>
</reference>
<accession>Q7S906</accession>
<keyword id="KW-0064">Aspartyl protease</keyword>
<keyword id="KW-0963">Cytoplasm</keyword>
<keyword id="KW-0378">Hydrolase</keyword>
<keyword id="KW-0645">Protease</keyword>
<keyword id="KW-0653">Protein transport</keyword>
<keyword id="KW-1185">Reference proteome</keyword>
<keyword id="KW-0813">Transport</keyword>
<dbReference type="EC" id="3.4.23.-" evidence="2"/>
<dbReference type="EMBL" id="CM002239">
    <property type="protein sequence ID" value="EAA32827.3"/>
    <property type="molecule type" value="Genomic_DNA"/>
</dbReference>
<dbReference type="RefSeq" id="XP_962063.3">
    <property type="nucleotide sequence ID" value="XM_956970.3"/>
</dbReference>
<dbReference type="SMR" id="Q7S906"/>
<dbReference type="FunCoup" id="Q7S906">
    <property type="interactions" value="273"/>
</dbReference>
<dbReference type="STRING" id="367110.Q7S906"/>
<dbReference type="MEROPS" id="A28.A06"/>
<dbReference type="PaxDb" id="5141-EFNCRP00000005017"/>
<dbReference type="EnsemblFungi" id="EAA32827">
    <property type="protein sequence ID" value="EAA32827"/>
    <property type="gene ID" value="NCU05292"/>
</dbReference>
<dbReference type="GeneID" id="3878211"/>
<dbReference type="KEGG" id="ncr:NCU05292"/>
<dbReference type="VEuPathDB" id="FungiDB:NCU05292"/>
<dbReference type="HOGENOM" id="CLU_020435_2_0_1"/>
<dbReference type="InParanoid" id="Q7S906"/>
<dbReference type="OrthoDB" id="1047367at2759"/>
<dbReference type="Proteomes" id="UP000001805">
    <property type="component" value="Chromosome 4, Linkage Group IV"/>
</dbReference>
<dbReference type="GO" id="GO:0005737">
    <property type="term" value="C:cytoplasm"/>
    <property type="evidence" value="ECO:0007669"/>
    <property type="project" value="UniProtKB-SubCell"/>
</dbReference>
<dbReference type="GO" id="GO:0004190">
    <property type="term" value="F:aspartic-type endopeptidase activity"/>
    <property type="evidence" value="ECO:0007669"/>
    <property type="project" value="UniProtKB-KW"/>
</dbReference>
<dbReference type="GO" id="GO:0015031">
    <property type="term" value="P:protein transport"/>
    <property type="evidence" value="ECO:0007669"/>
    <property type="project" value="UniProtKB-KW"/>
</dbReference>
<dbReference type="GO" id="GO:0006508">
    <property type="term" value="P:proteolysis"/>
    <property type="evidence" value="ECO:0007669"/>
    <property type="project" value="UniProtKB-KW"/>
</dbReference>
<dbReference type="CDD" id="cd05479">
    <property type="entry name" value="RP_DDI"/>
    <property type="match status" value="1"/>
</dbReference>
<dbReference type="CDD" id="cd14309">
    <property type="entry name" value="UBA_scDdi1_like"/>
    <property type="match status" value="1"/>
</dbReference>
<dbReference type="CDD" id="cd01796">
    <property type="entry name" value="Ubl_Ddi1_like"/>
    <property type="match status" value="1"/>
</dbReference>
<dbReference type="Gene3D" id="2.40.70.10">
    <property type="entry name" value="Acid Proteases"/>
    <property type="match status" value="1"/>
</dbReference>
<dbReference type="Gene3D" id="1.10.8.10">
    <property type="entry name" value="DNA helicase RuvA subunit, C-terminal domain"/>
    <property type="match status" value="1"/>
</dbReference>
<dbReference type="Gene3D" id="3.10.20.90">
    <property type="entry name" value="Phosphatidylinositol 3-kinase Catalytic Subunit, Chain A, domain 1"/>
    <property type="match status" value="1"/>
</dbReference>
<dbReference type="InterPro" id="IPR001969">
    <property type="entry name" value="Aspartic_peptidase_AS"/>
</dbReference>
<dbReference type="InterPro" id="IPR033882">
    <property type="entry name" value="DDI1_N"/>
</dbReference>
<dbReference type="InterPro" id="IPR019103">
    <property type="entry name" value="Peptidase_aspartic_DDI1-type"/>
</dbReference>
<dbReference type="InterPro" id="IPR021109">
    <property type="entry name" value="Peptidase_aspartic_dom_sf"/>
</dbReference>
<dbReference type="InterPro" id="IPR015940">
    <property type="entry name" value="UBA"/>
</dbReference>
<dbReference type="InterPro" id="IPR009060">
    <property type="entry name" value="UBA-like_sf"/>
</dbReference>
<dbReference type="InterPro" id="IPR000626">
    <property type="entry name" value="Ubiquitin-like_dom"/>
</dbReference>
<dbReference type="InterPro" id="IPR029071">
    <property type="entry name" value="Ubiquitin-like_domsf"/>
</dbReference>
<dbReference type="PANTHER" id="PTHR12917">
    <property type="entry name" value="ASPARTYL PROTEASE DDI-RELATED"/>
    <property type="match status" value="1"/>
</dbReference>
<dbReference type="PANTHER" id="PTHR12917:SF1">
    <property type="entry name" value="AT13091P"/>
    <property type="match status" value="1"/>
</dbReference>
<dbReference type="Pfam" id="PF09668">
    <property type="entry name" value="Asp_protease"/>
    <property type="match status" value="1"/>
</dbReference>
<dbReference type="Pfam" id="PF00627">
    <property type="entry name" value="UBA"/>
    <property type="match status" value="1"/>
</dbReference>
<dbReference type="Pfam" id="PF00240">
    <property type="entry name" value="ubiquitin"/>
    <property type="match status" value="1"/>
</dbReference>
<dbReference type="SMART" id="SM00165">
    <property type="entry name" value="UBA"/>
    <property type="match status" value="1"/>
</dbReference>
<dbReference type="SMART" id="SM00213">
    <property type="entry name" value="UBQ"/>
    <property type="match status" value="1"/>
</dbReference>
<dbReference type="SUPFAM" id="SSF50630">
    <property type="entry name" value="Acid proteases"/>
    <property type="match status" value="1"/>
</dbReference>
<dbReference type="SUPFAM" id="SSF46934">
    <property type="entry name" value="UBA-like"/>
    <property type="match status" value="1"/>
</dbReference>
<dbReference type="SUPFAM" id="SSF54236">
    <property type="entry name" value="Ubiquitin-like"/>
    <property type="match status" value="1"/>
</dbReference>
<dbReference type="PROSITE" id="PS50030">
    <property type="entry name" value="UBA"/>
    <property type="match status" value="1"/>
</dbReference>
<dbReference type="PROSITE" id="PS50053">
    <property type="entry name" value="UBIQUITIN_2"/>
    <property type="match status" value="1"/>
</dbReference>
<evidence type="ECO:0000250" key="1"/>
<evidence type="ECO:0000250" key="2">
    <source>
        <dbReference type="UniProtKB" id="I7HUG0"/>
    </source>
</evidence>
<evidence type="ECO:0000250" key="3">
    <source>
        <dbReference type="UniProtKB" id="P40087"/>
    </source>
</evidence>
<evidence type="ECO:0000255" key="4">
    <source>
        <dbReference type="PROSITE-ProRule" id="PRU00212"/>
    </source>
</evidence>
<evidence type="ECO:0000255" key="5">
    <source>
        <dbReference type="PROSITE-ProRule" id="PRU00214"/>
    </source>
</evidence>
<evidence type="ECO:0000256" key="6">
    <source>
        <dbReference type="SAM" id="MobiDB-lite"/>
    </source>
</evidence>
<evidence type="ECO:0000305" key="7"/>
<name>DDI1_NEUCR</name>
<proteinExistence type="inferred from homology"/>